<accession>O77081</accession>
<accession>Q9NEW9</accession>
<organism>
    <name type="scientific">Caenorhabditis elegans</name>
    <dbReference type="NCBI Taxonomy" id="6239"/>
    <lineage>
        <taxon>Eukaryota</taxon>
        <taxon>Metazoa</taxon>
        <taxon>Ecdysozoa</taxon>
        <taxon>Nematoda</taxon>
        <taxon>Chromadorea</taxon>
        <taxon>Rhabditida</taxon>
        <taxon>Rhabditina</taxon>
        <taxon>Rhabditomorpha</taxon>
        <taxon>Rhabditoidea</taxon>
        <taxon>Rhabditidae</taxon>
        <taxon>Peloderinae</taxon>
        <taxon>Caenorhabditis</taxon>
    </lineage>
</organism>
<comment type="function">
    <text evidence="1">Catalyzes the O-sulfation of tyrosine residues within acidic motifs of polypeptides, using 3'-phosphoadenylyl sulfate (PAPS) as cosubstrate.</text>
</comment>
<comment type="catalytic activity">
    <reaction evidence="1">
        <text>L-tyrosyl-[protein] + 3'-phosphoadenylyl sulfate = O-sulfo-L-tyrosine-[protein] + adenosine 3',5'-bisphosphate + H(+)</text>
        <dbReference type="Rhea" id="RHEA:16801"/>
        <dbReference type="Rhea" id="RHEA-COMP:10136"/>
        <dbReference type="Rhea" id="RHEA-COMP:11688"/>
        <dbReference type="ChEBI" id="CHEBI:15378"/>
        <dbReference type="ChEBI" id="CHEBI:46858"/>
        <dbReference type="ChEBI" id="CHEBI:58339"/>
        <dbReference type="ChEBI" id="CHEBI:58343"/>
        <dbReference type="ChEBI" id="CHEBI:65286"/>
        <dbReference type="EC" id="2.8.2.20"/>
    </reaction>
</comment>
<comment type="subcellular location">
    <subcellularLocation>
        <location evidence="1">Golgi apparatus membrane</location>
        <topology evidence="1">Single-pass type II membrane protein</topology>
    </subcellularLocation>
</comment>
<comment type="similarity">
    <text evidence="4">Belongs to the protein sulfotransferase family.</text>
</comment>
<sequence>MRKNRELLLVLFLVVFILFYFITARTADDPYYSNHREKFNGAAADDGDESLPFHQLTSVRSDDGYNRTSPFIFIGGVPRSGTTLMRAMLDAHPEVRCGEETRVIPRILNLRSQWKKSEKEWNRLQQAGVTGEVINNAISSFIMEIMVGHGDRAPRLCNKDPFTMKSAVYLKELFPNAKYLLMIRDGRATVNSIISRKVTITGFDLNDFRQCMTKWNAAIQIMVDQCESVGEKNCLKVYYEQLVLHPEAQMRRITEFLDIPWDDKVLHHEQLIGKDISLSNVERSSDQVVKPVNLDALIKWVGTIPEDVVADMDSVAPMLRRLGYDPNANPPNYGKPDELVAKKTEDVHKNGAEWYKKAVQVVNDPGRVDKPIVDNEVSKL</sequence>
<feature type="chain" id="PRO_0000189831" description="Protein-tyrosine sulfotransferase A">
    <location>
        <begin position="1"/>
        <end position="380"/>
    </location>
</feature>
<feature type="topological domain" description="Cytoplasmic" evidence="2">
    <location>
        <begin position="1"/>
        <end position="6"/>
    </location>
</feature>
<feature type="transmembrane region" description="Helical; Signal-anchor for type II membrane protein" evidence="2">
    <location>
        <begin position="7"/>
        <end position="27"/>
    </location>
</feature>
<feature type="topological domain" description="Lumenal" evidence="2">
    <location>
        <begin position="28"/>
        <end position="380"/>
    </location>
</feature>
<feature type="region of interest" description="Interaction with peptide substrate" evidence="1">
    <location>
        <begin position="102"/>
        <end position="106"/>
    </location>
</feature>
<feature type="active site" description="Proton donor/acceptor" evidence="1">
    <location>
        <position position="100"/>
    </location>
</feature>
<feature type="binding site" evidence="1">
    <location>
        <begin position="79"/>
        <end position="83"/>
    </location>
    <ligand>
        <name>3'-phosphoadenylyl sulfate</name>
        <dbReference type="ChEBI" id="CHEBI:58339"/>
    </ligand>
</feature>
<feature type="binding site" evidence="1">
    <location>
        <position position="184"/>
    </location>
    <ligand>
        <name>3'-phosphoadenylyl sulfate</name>
        <dbReference type="ChEBI" id="CHEBI:58339"/>
    </ligand>
</feature>
<feature type="binding site" evidence="1">
    <location>
        <position position="192"/>
    </location>
    <ligand>
        <name>3'-phosphoadenylyl sulfate</name>
        <dbReference type="ChEBI" id="CHEBI:58339"/>
    </ligand>
</feature>
<feature type="binding site" evidence="1">
    <location>
        <position position="196"/>
    </location>
    <ligand>
        <name>3'-phosphoadenylyl sulfate</name>
        <dbReference type="ChEBI" id="CHEBI:58339"/>
    </ligand>
</feature>
<feature type="binding site" evidence="1">
    <location>
        <position position="239"/>
    </location>
    <ligand>
        <name>3'-phosphoadenylyl sulfate</name>
        <dbReference type="ChEBI" id="CHEBI:58339"/>
    </ligand>
</feature>
<feature type="binding site" evidence="1">
    <location>
        <begin position="284"/>
        <end position="293"/>
    </location>
    <ligand>
        <name>3'-phosphoadenylyl sulfate</name>
        <dbReference type="ChEBI" id="CHEBI:58339"/>
    </ligand>
</feature>
<feature type="binding site" evidence="1">
    <location>
        <position position="299"/>
    </location>
    <ligand>
        <name>3'-phosphoadenylyl sulfate</name>
        <dbReference type="ChEBI" id="CHEBI:58339"/>
    </ligand>
</feature>
<feature type="site" description="Transition state stabilizer" evidence="1">
    <location>
        <position position="159"/>
    </location>
</feature>
<feature type="site" description="Transition state stabilizer" evidence="1">
    <location>
        <position position="284"/>
    </location>
</feature>
<feature type="glycosylation site" description="N-linked (GlcNAc...) asparagine" evidence="3">
    <location>
        <position position="66"/>
    </location>
</feature>
<feature type="disulfide bond" evidence="1">
    <location>
        <begin position="97"/>
        <end position="157"/>
    </location>
</feature>
<feature type="disulfide bond" evidence="1">
    <location>
        <begin position="226"/>
        <end position="234"/>
    </location>
</feature>
<evidence type="ECO:0000250" key="1">
    <source>
        <dbReference type="UniProtKB" id="O60704"/>
    </source>
</evidence>
<evidence type="ECO:0000255" key="2"/>
<evidence type="ECO:0000269" key="3">
    <source>
    </source>
</evidence>
<evidence type="ECO:0000305" key="4"/>
<protein>
    <recommendedName>
        <fullName>Protein-tyrosine sulfotransferase A</fullName>
        <ecNumber evidence="1">2.8.2.20</ecNumber>
    </recommendedName>
    <alternativeName>
        <fullName>Tyrosylprotein sulfotransferase A</fullName>
        <shortName>TPST-A</shortName>
    </alternativeName>
</protein>
<reference key="1">
    <citation type="journal article" date="1998" name="J. Biol. Chem.">
        <title>Molecular cloning and expression of human and mouse tyrosylprotein sulfotransferase-2 and a tyrosylprotein sulfotransferase homologue in Caenorhabditis elegans.</title>
        <authorList>
            <person name="Ouyang Y.-B."/>
            <person name="Moore K.L."/>
        </authorList>
    </citation>
    <scope>NUCLEOTIDE SEQUENCE [MRNA]</scope>
    <source>
        <strain>Bristol N2</strain>
    </source>
</reference>
<reference key="2">
    <citation type="journal article" date="1998" name="Science">
        <title>Genome sequence of the nematode C. elegans: a platform for investigating biology.</title>
        <authorList>
            <consortium name="The C. elegans sequencing consortium"/>
        </authorList>
    </citation>
    <scope>NUCLEOTIDE SEQUENCE [LARGE SCALE GENOMIC DNA]</scope>
    <source>
        <strain>Bristol N2</strain>
    </source>
</reference>
<reference key="3">
    <citation type="journal article" date="2007" name="Mol. Cell. Proteomics">
        <title>Proteomics reveals N-linked glycoprotein diversity in Caenorhabditis elegans and suggests an atypical translocation mechanism for integral membrane proteins.</title>
        <authorList>
            <person name="Kaji H."/>
            <person name="Kamiie J."/>
            <person name="Kawakami H."/>
            <person name="Kido K."/>
            <person name="Yamauchi Y."/>
            <person name="Shinkawa T."/>
            <person name="Taoka M."/>
            <person name="Takahashi N."/>
            <person name="Isobe T."/>
        </authorList>
    </citation>
    <scope>GLYCOSYLATION [LARGE SCALE ANALYSIS] AT ASN-66</scope>
    <scope>IDENTIFICATION BY MASS SPECTROMETRY</scope>
    <source>
        <strain>Bristol N2</strain>
    </source>
</reference>
<proteinExistence type="evidence at protein level"/>
<gene>
    <name type="primary">tpst-1</name>
    <name type="ORF">Y111B2A.15</name>
</gene>
<dbReference type="EC" id="2.8.2.20" evidence="1"/>
<dbReference type="EMBL" id="AF049709">
    <property type="protein sequence ID" value="AAC36062.1"/>
    <property type="molecule type" value="mRNA"/>
</dbReference>
<dbReference type="EMBL" id="BX284603">
    <property type="protein sequence ID" value="CAC35844.1"/>
    <property type="molecule type" value="Genomic_DNA"/>
</dbReference>
<dbReference type="PIR" id="T42755">
    <property type="entry name" value="T42755"/>
</dbReference>
<dbReference type="RefSeq" id="NP_499646.3">
    <property type="nucleotide sequence ID" value="NM_067245.3"/>
</dbReference>
<dbReference type="SMR" id="O77081"/>
<dbReference type="BioGRID" id="41862">
    <property type="interactions" value="1"/>
</dbReference>
<dbReference type="FunCoup" id="O77081">
    <property type="interactions" value="504"/>
</dbReference>
<dbReference type="STRING" id="6239.Y111B2A.15.1"/>
<dbReference type="GlyCosmos" id="O77081">
    <property type="glycosylation" value="1 site, No reported glycans"/>
</dbReference>
<dbReference type="iPTMnet" id="O77081"/>
<dbReference type="PaxDb" id="6239-Y111B2A.15"/>
<dbReference type="PeptideAtlas" id="O77081"/>
<dbReference type="EnsemblMetazoa" id="Y111B2A.15.1">
    <property type="protein sequence ID" value="Y111B2A.15.1"/>
    <property type="gene ID" value="WBGene00013737"/>
</dbReference>
<dbReference type="GeneID" id="176684"/>
<dbReference type="KEGG" id="cel:CELE_Y111B2A.15"/>
<dbReference type="AGR" id="WB:WBGene00013737"/>
<dbReference type="CTD" id="176684"/>
<dbReference type="WormBase" id="Y111B2A.15">
    <property type="protein sequence ID" value="CE26632"/>
    <property type="gene ID" value="WBGene00013737"/>
    <property type="gene designation" value="tpst-1"/>
</dbReference>
<dbReference type="eggNOG" id="KOG3988">
    <property type="taxonomic scope" value="Eukaryota"/>
</dbReference>
<dbReference type="GeneTree" id="ENSGT00390000006030"/>
<dbReference type="HOGENOM" id="CLU_046916_0_0_1"/>
<dbReference type="InParanoid" id="O77081"/>
<dbReference type="OMA" id="SQWKKSE"/>
<dbReference type="OrthoDB" id="545675at2759"/>
<dbReference type="PhylomeDB" id="O77081"/>
<dbReference type="PRO" id="PR:O77081"/>
<dbReference type="Proteomes" id="UP000001940">
    <property type="component" value="Chromosome III"/>
</dbReference>
<dbReference type="Bgee" id="WBGene00013737">
    <property type="expression patterns" value="Expressed in pharyngeal muscle cell (C elegans) and 4 other cell types or tissues"/>
</dbReference>
<dbReference type="GO" id="GO:0005794">
    <property type="term" value="C:Golgi apparatus"/>
    <property type="evidence" value="ECO:0000318"/>
    <property type="project" value="GO_Central"/>
</dbReference>
<dbReference type="GO" id="GO:0000139">
    <property type="term" value="C:Golgi membrane"/>
    <property type="evidence" value="ECO:0007669"/>
    <property type="project" value="UniProtKB-SubCell"/>
</dbReference>
<dbReference type="GO" id="GO:0005802">
    <property type="term" value="C:trans-Golgi network"/>
    <property type="evidence" value="ECO:0000314"/>
    <property type="project" value="WormBase"/>
</dbReference>
<dbReference type="GO" id="GO:0008476">
    <property type="term" value="F:protein-tyrosine sulfotransferase activity"/>
    <property type="evidence" value="ECO:0000314"/>
    <property type="project" value="WormBase"/>
</dbReference>
<dbReference type="GO" id="GO:0032963">
    <property type="term" value="P:collagen metabolic process"/>
    <property type="evidence" value="ECO:0000315"/>
    <property type="project" value="WormBase"/>
</dbReference>
<dbReference type="GO" id="GO:0042338">
    <property type="term" value="P:cuticle development involved in collagen and cuticulin-based cuticle molting cycle"/>
    <property type="evidence" value="ECO:0000315"/>
    <property type="project" value="WormBase"/>
</dbReference>
<dbReference type="GO" id="GO:0040012">
    <property type="term" value="P:regulation of locomotion"/>
    <property type="evidence" value="ECO:0000315"/>
    <property type="project" value="WormBase"/>
</dbReference>
<dbReference type="GO" id="GO:0061062">
    <property type="term" value="P:regulation of nematode larval development"/>
    <property type="evidence" value="ECO:0000315"/>
    <property type="project" value="WormBase"/>
</dbReference>
<dbReference type="FunFam" id="3.40.50.300:FF:000290">
    <property type="entry name" value="Protein-tyrosine sulfotransferase"/>
    <property type="match status" value="1"/>
</dbReference>
<dbReference type="Gene3D" id="3.40.50.300">
    <property type="entry name" value="P-loop containing nucleotide triphosphate hydrolases"/>
    <property type="match status" value="1"/>
</dbReference>
<dbReference type="InterPro" id="IPR027417">
    <property type="entry name" value="P-loop_NTPase"/>
</dbReference>
<dbReference type="InterPro" id="IPR026634">
    <property type="entry name" value="TPST-like"/>
</dbReference>
<dbReference type="PANTHER" id="PTHR12788:SF10">
    <property type="entry name" value="PROTEIN-TYROSINE SULFOTRANSFERASE"/>
    <property type="match status" value="1"/>
</dbReference>
<dbReference type="PANTHER" id="PTHR12788">
    <property type="entry name" value="PROTEIN-TYROSINE SULFOTRANSFERASE 2"/>
    <property type="match status" value="1"/>
</dbReference>
<dbReference type="Pfam" id="PF13469">
    <property type="entry name" value="Sulfotransfer_3"/>
    <property type="match status" value="1"/>
</dbReference>
<dbReference type="SUPFAM" id="SSF52540">
    <property type="entry name" value="P-loop containing nucleoside triphosphate hydrolases"/>
    <property type="match status" value="1"/>
</dbReference>
<name>TPSTA_CAEEL</name>
<keyword id="KW-1015">Disulfide bond</keyword>
<keyword id="KW-0325">Glycoprotein</keyword>
<keyword id="KW-0333">Golgi apparatus</keyword>
<keyword id="KW-0472">Membrane</keyword>
<keyword id="KW-1185">Reference proteome</keyword>
<keyword id="KW-0735">Signal-anchor</keyword>
<keyword id="KW-0808">Transferase</keyword>
<keyword id="KW-0812">Transmembrane</keyword>
<keyword id="KW-1133">Transmembrane helix</keyword>